<keyword id="KW-0687">Ribonucleoprotein</keyword>
<keyword id="KW-0689">Ribosomal protein</keyword>
<keyword id="KW-0694">RNA-binding</keyword>
<keyword id="KW-0699">rRNA-binding</keyword>
<sequence length="275" mass="30205">MAIVKVKPTSPGRRAMVKVVNKDLHKGKPHAALLDTQSSKAGRNNNGCITTRHQGGGHKQHYRVIDFRRTKDGIPAKVERLEYDPNRSANIALVLYADGERRYIIAPKGVTVGQQLMSGSEAPIRAGNTLPIRNIPVGTTIHCIEMLPGKGAQMARSAGTSAMLLAREGLYAQVRLRSGEIRRVHIECRATIGEVGNEEHSLRQIGKAGANRWRGIRPTVRGVAMNPIDHPHGGGEGRTAAGRDPVSPWGTPTKGFRTRRNKRTTTMIVQRRHKR</sequence>
<accession>A2S7H9</accession>
<name>RL2_BURM9</name>
<comment type="function">
    <text evidence="1">One of the primary rRNA binding proteins. Required for association of the 30S and 50S subunits to form the 70S ribosome, for tRNA binding and peptide bond formation. It has been suggested to have peptidyltransferase activity; this is somewhat controversial. Makes several contacts with the 16S rRNA in the 70S ribosome.</text>
</comment>
<comment type="subunit">
    <text evidence="1">Part of the 50S ribosomal subunit. Forms a bridge to the 30S subunit in the 70S ribosome.</text>
</comment>
<comment type="similarity">
    <text evidence="1">Belongs to the universal ribosomal protein uL2 family.</text>
</comment>
<evidence type="ECO:0000255" key="1">
    <source>
        <dbReference type="HAMAP-Rule" id="MF_01320"/>
    </source>
</evidence>
<evidence type="ECO:0000256" key="2">
    <source>
        <dbReference type="SAM" id="MobiDB-lite"/>
    </source>
</evidence>
<evidence type="ECO:0000305" key="3"/>
<reference key="1">
    <citation type="journal article" date="2010" name="Genome Biol. Evol.">
        <title>Continuing evolution of Burkholderia mallei through genome reduction and large-scale rearrangements.</title>
        <authorList>
            <person name="Losada L."/>
            <person name="Ronning C.M."/>
            <person name="DeShazer D."/>
            <person name="Woods D."/>
            <person name="Fedorova N."/>
            <person name="Kim H.S."/>
            <person name="Shabalina S.A."/>
            <person name="Pearson T.R."/>
            <person name="Brinkac L."/>
            <person name="Tan P."/>
            <person name="Nandi T."/>
            <person name="Crabtree J."/>
            <person name="Badger J."/>
            <person name="Beckstrom-Sternberg S."/>
            <person name="Saqib M."/>
            <person name="Schutzer S.E."/>
            <person name="Keim P."/>
            <person name="Nierman W.C."/>
        </authorList>
    </citation>
    <scope>NUCLEOTIDE SEQUENCE [LARGE SCALE GENOMIC DNA]</scope>
    <source>
        <strain>NCTC 10229</strain>
    </source>
</reference>
<proteinExistence type="inferred from homology"/>
<feature type="chain" id="PRO_0000309883" description="Large ribosomal subunit protein uL2">
    <location>
        <begin position="1"/>
        <end position="275"/>
    </location>
</feature>
<feature type="region of interest" description="Disordered" evidence="2">
    <location>
        <begin position="224"/>
        <end position="257"/>
    </location>
</feature>
<dbReference type="EMBL" id="CP000546">
    <property type="protein sequence ID" value="ABN03329.1"/>
    <property type="molecule type" value="Genomic_DNA"/>
</dbReference>
<dbReference type="RefSeq" id="WP_004202759.1">
    <property type="nucleotide sequence ID" value="NC_008836.1"/>
</dbReference>
<dbReference type="SMR" id="A2S7H9"/>
<dbReference type="KEGG" id="bml:BMA10229_A1927"/>
<dbReference type="HOGENOM" id="CLU_036235_2_1_4"/>
<dbReference type="Proteomes" id="UP000002283">
    <property type="component" value="Chromosome I"/>
</dbReference>
<dbReference type="GO" id="GO:0015934">
    <property type="term" value="C:large ribosomal subunit"/>
    <property type="evidence" value="ECO:0007669"/>
    <property type="project" value="InterPro"/>
</dbReference>
<dbReference type="GO" id="GO:0019843">
    <property type="term" value="F:rRNA binding"/>
    <property type="evidence" value="ECO:0007669"/>
    <property type="project" value="UniProtKB-UniRule"/>
</dbReference>
<dbReference type="GO" id="GO:0003735">
    <property type="term" value="F:structural constituent of ribosome"/>
    <property type="evidence" value="ECO:0007669"/>
    <property type="project" value="InterPro"/>
</dbReference>
<dbReference type="GO" id="GO:0016740">
    <property type="term" value="F:transferase activity"/>
    <property type="evidence" value="ECO:0007669"/>
    <property type="project" value="InterPro"/>
</dbReference>
<dbReference type="GO" id="GO:0002181">
    <property type="term" value="P:cytoplasmic translation"/>
    <property type="evidence" value="ECO:0007669"/>
    <property type="project" value="TreeGrafter"/>
</dbReference>
<dbReference type="FunFam" id="2.30.30.30:FF:000001">
    <property type="entry name" value="50S ribosomal protein L2"/>
    <property type="match status" value="1"/>
</dbReference>
<dbReference type="FunFam" id="2.40.50.140:FF:000003">
    <property type="entry name" value="50S ribosomal protein L2"/>
    <property type="match status" value="1"/>
</dbReference>
<dbReference type="FunFam" id="4.10.950.10:FF:000001">
    <property type="entry name" value="50S ribosomal protein L2"/>
    <property type="match status" value="1"/>
</dbReference>
<dbReference type="Gene3D" id="2.30.30.30">
    <property type="match status" value="1"/>
</dbReference>
<dbReference type="Gene3D" id="2.40.50.140">
    <property type="entry name" value="Nucleic acid-binding proteins"/>
    <property type="match status" value="1"/>
</dbReference>
<dbReference type="Gene3D" id="4.10.950.10">
    <property type="entry name" value="Ribosomal protein L2, domain 3"/>
    <property type="match status" value="1"/>
</dbReference>
<dbReference type="HAMAP" id="MF_01320_B">
    <property type="entry name" value="Ribosomal_uL2_B"/>
    <property type="match status" value="1"/>
</dbReference>
<dbReference type="InterPro" id="IPR012340">
    <property type="entry name" value="NA-bd_OB-fold"/>
</dbReference>
<dbReference type="InterPro" id="IPR014722">
    <property type="entry name" value="Rib_uL2_dom2"/>
</dbReference>
<dbReference type="InterPro" id="IPR002171">
    <property type="entry name" value="Ribosomal_uL2"/>
</dbReference>
<dbReference type="InterPro" id="IPR005880">
    <property type="entry name" value="Ribosomal_uL2_bac/org-type"/>
</dbReference>
<dbReference type="InterPro" id="IPR022669">
    <property type="entry name" value="Ribosomal_uL2_C"/>
</dbReference>
<dbReference type="InterPro" id="IPR022671">
    <property type="entry name" value="Ribosomal_uL2_CS"/>
</dbReference>
<dbReference type="InterPro" id="IPR014726">
    <property type="entry name" value="Ribosomal_uL2_dom3"/>
</dbReference>
<dbReference type="InterPro" id="IPR022666">
    <property type="entry name" value="Ribosomal_uL2_RNA-bd_dom"/>
</dbReference>
<dbReference type="InterPro" id="IPR008991">
    <property type="entry name" value="Translation_prot_SH3-like_sf"/>
</dbReference>
<dbReference type="NCBIfam" id="TIGR01171">
    <property type="entry name" value="rplB_bact"/>
    <property type="match status" value="1"/>
</dbReference>
<dbReference type="PANTHER" id="PTHR13691:SF5">
    <property type="entry name" value="LARGE RIBOSOMAL SUBUNIT PROTEIN UL2M"/>
    <property type="match status" value="1"/>
</dbReference>
<dbReference type="PANTHER" id="PTHR13691">
    <property type="entry name" value="RIBOSOMAL PROTEIN L2"/>
    <property type="match status" value="1"/>
</dbReference>
<dbReference type="Pfam" id="PF00181">
    <property type="entry name" value="Ribosomal_L2"/>
    <property type="match status" value="1"/>
</dbReference>
<dbReference type="Pfam" id="PF03947">
    <property type="entry name" value="Ribosomal_L2_C"/>
    <property type="match status" value="1"/>
</dbReference>
<dbReference type="PIRSF" id="PIRSF002158">
    <property type="entry name" value="Ribosomal_L2"/>
    <property type="match status" value="1"/>
</dbReference>
<dbReference type="SMART" id="SM01383">
    <property type="entry name" value="Ribosomal_L2"/>
    <property type="match status" value="1"/>
</dbReference>
<dbReference type="SMART" id="SM01382">
    <property type="entry name" value="Ribosomal_L2_C"/>
    <property type="match status" value="1"/>
</dbReference>
<dbReference type="SUPFAM" id="SSF50249">
    <property type="entry name" value="Nucleic acid-binding proteins"/>
    <property type="match status" value="1"/>
</dbReference>
<dbReference type="SUPFAM" id="SSF50104">
    <property type="entry name" value="Translation proteins SH3-like domain"/>
    <property type="match status" value="1"/>
</dbReference>
<dbReference type="PROSITE" id="PS00467">
    <property type="entry name" value="RIBOSOMAL_L2"/>
    <property type="match status" value="1"/>
</dbReference>
<protein>
    <recommendedName>
        <fullName evidence="1">Large ribosomal subunit protein uL2</fullName>
    </recommendedName>
    <alternativeName>
        <fullName evidence="3">50S ribosomal protein L2</fullName>
    </alternativeName>
</protein>
<organism>
    <name type="scientific">Burkholderia mallei (strain NCTC 10229)</name>
    <dbReference type="NCBI Taxonomy" id="412022"/>
    <lineage>
        <taxon>Bacteria</taxon>
        <taxon>Pseudomonadati</taxon>
        <taxon>Pseudomonadota</taxon>
        <taxon>Betaproteobacteria</taxon>
        <taxon>Burkholderiales</taxon>
        <taxon>Burkholderiaceae</taxon>
        <taxon>Burkholderia</taxon>
        <taxon>pseudomallei group</taxon>
    </lineage>
</organism>
<gene>
    <name evidence="1" type="primary">rplB</name>
    <name type="ordered locus">BMA10229_A1927</name>
</gene>